<accession>A3NCL8</accession>
<reference key="1">
    <citation type="journal article" date="2010" name="Genome Biol. Evol.">
        <title>Continuing evolution of Burkholderia mallei through genome reduction and large-scale rearrangements.</title>
        <authorList>
            <person name="Losada L."/>
            <person name="Ronning C.M."/>
            <person name="DeShazer D."/>
            <person name="Woods D."/>
            <person name="Fedorova N."/>
            <person name="Kim H.S."/>
            <person name="Shabalina S.A."/>
            <person name="Pearson T.R."/>
            <person name="Brinkac L."/>
            <person name="Tan P."/>
            <person name="Nandi T."/>
            <person name="Crabtree J."/>
            <person name="Badger J."/>
            <person name="Beckstrom-Sternberg S."/>
            <person name="Saqib M."/>
            <person name="Schutzer S.E."/>
            <person name="Keim P."/>
            <person name="Nierman W.C."/>
        </authorList>
    </citation>
    <scope>NUCLEOTIDE SEQUENCE [LARGE SCALE GENOMIC DNA]</scope>
    <source>
        <strain>668</strain>
    </source>
</reference>
<keyword id="KW-0143">Chaperone</keyword>
<keyword id="KW-0963">Cytoplasm</keyword>
<keyword id="KW-0533">Nickel</keyword>
<keyword id="KW-0996">Nickel insertion</keyword>
<sequence length="205" mass="22105">MRTIDKRIAPNVRLAATLVARAPALTLAYDARCKSRLAATLDTGEDVALVLPRGTVLRDGDVLVADDGALVRVAAAHEAVLLVRAPDALTLTRAAYHLGNRHTPVEVGAGCLKLEYDPVLADMLTRLGATVERASAPFQPEAGAYGGGHRHGHDATFAEDYALAQQVFDEHHGHSHSHSHDHDHDHDHDHQHGPCCSHGHHHGHR</sequence>
<gene>
    <name evidence="1" type="primary">ureE</name>
    <name type="ordered locus">BURPS668_3077</name>
</gene>
<evidence type="ECO:0000255" key="1">
    <source>
        <dbReference type="HAMAP-Rule" id="MF_00822"/>
    </source>
</evidence>
<evidence type="ECO:0000256" key="2">
    <source>
        <dbReference type="SAM" id="MobiDB-lite"/>
    </source>
</evidence>
<proteinExistence type="inferred from homology"/>
<feature type="chain" id="PRO_1000083882" description="Urease accessory protein UreE">
    <location>
        <begin position="1"/>
        <end position="205"/>
    </location>
</feature>
<feature type="region of interest" description="Disordered" evidence="2">
    <location>
        <begin position="170"/>
        <end position="205"/>
    </location>
</feature>
<feature type="compositionally biased region" description="Basic and acidic residues" evidence="2">
    <location>
        <begin position="170"/>
        <end position="192"/>
    </location>
</feature>
<dbReference type="EMBL" id="CP000570">
    <property type="protein sequence ID" value="ABN81468.1"/>
    <property type="molecule type" value="Genomic_DNA"/>
</dbReference>
<dbReference type="RefSeq" id="WP_004535879.1">
    <property type="nucleotide sequence ID" value="NC_009074.1"/>
</dbReference>
<dbReference type="SMR" id="A3NCL8"/>
<dbReference type="KEGG" id="bpd:BURPS668_3077"/>
<dbReference type="HOGENOM" id="CLU_093757_0_0_4"/>
<dbReference type="GO" id="GO:0005737">
    <property type="term" value="C:cytoplasm"/>
    <property type="evidence" value="ECO:0007669"/>
    <property type="project" value="UniProtKB-SubCell"/>
</dbReference>
<dbReference type="GO" id="GO:0016151">
    <property type="term" value="F:nickel cation binding"/>
    <property type="evidence" value="ECO:0007669"/>
    <property type="project" value="UniProtKB-UniRule"/>
</dbReference>
<dbReference type="GO" id="GO:0051082">
    <property type="term" value="F:unfolded protein binding"/>
    <property type="evidence" value="ECO:0007669"/>
    <property type="project" value="UniProtKB-UniRule"/>
</dbReference>
<dbReference type="GO" id="GO:0006457">
    <property type="term" value="P:protein folding"/>
    <property type="evidence" value="ECO:0007669"/>
    <property type="project" value="InterPro"/>
</dbReference>
<dbReference type="GO" id="GO:0065003">
    <property type="term" value="P:protein-containing complex assembly"/>
    <property type="evidence" value="ECO:0007669"/>
    <property type="project" value="InterPro"/>
</dbReference>
<dbReference type="GO" id="GO:0019627">
    <property type="term" value="P:urea metabolic process"/>
    <property type="evidence" value="ECO:0007669"/>
    <property type="project" value="InterPro"/>
</dbReference>
<dbReference type="CDD" id="cd00571">
    <property type="entry name" value="UreE"/>
    <property type="match status" value="1"/>
</dbReference>
<dbReference type="Gene3D" id="2.60.260.20">
    <property type="entry name" value="Urease metallochaperone UreE, N-terminal domain"/>
    <property type="match status" value="1"/>
</dbReference>
<dbReference type="Gene3D" id="3.30.70.790">
    <property type="entry name" value="UreE, C-terminal domain"/>
    <property type="match status" value="1"/>
</dbReference>
<dbReference type="HAMAP" id="MF_00822">
    <property type="entry name" value="UreE"/>
    <property type="match status" value="1"/>
</dbReference>
<dbReference type="InterPro" id="IPR012406">
    <property type="entry name" value="UreE"/>
</dbReference>
<dbReference type="InterPro" id="IPR007864">
    <property type="entry name" value="UreE_C_dom"/>
</dbReference>
<dbReference type="InterPro" id="IPR004029">
    <property type="entry name" value="UreE_N"/>
</dbReference>
<dbReference type="InterPro" id="IPR036118">
    <property type="entry name" value="UreE_N_sf"/>
</dbReference>
<dbReference type="NCBIfam" id="NF009751">
    <property type="entry name" value="PRK13261.1-1"/>
    <property type="match status" value="1"/>
</dbReference>
<dbReference type="NCBIfam" id="NF009762">
    <property type="entry name" value="PRK13263.1"/>
    <property type="match status" value="1"/>
</dbReference>
<dbReference type="Pfam" id="PF05194">
    <property type="entry name" value="UreE_C"/>
    <property type="match status" value="1"/>
</dbReference>
<dbReference type="Pfam" id="PF02814">
    <property type="entry name" value="UreE_N"/>
    <property type="match status" value="1"/>
</dbReference>
<dbReference type="SMART" id="SM00988">
    <property type="entry name" value="UreE_N"/>
    <property type="match status" value="1"/>
</dbReference>
<dbReference type="SUPFAM" id="SSF69737">
    <property type="entry name" value="Urease metallochaperone UreE, C-terminal domain"/>
    <property type="match status" value="1"/>
</dbReference>
<dbReference type="SUPFAM" id="SSF69287">
    <property type="entry name" value="Urease metallochaperone UreE, N-terminal domain"/>
    <property type="match status" value="1"/>
</dbReference>
<name>UREE_BURP6</name>
<protein>
    <recommendedName>
        <fullName evidence="1">Urease accessory protein UreE</fullName>
    </recommendedName>
</protein>
<organism>
    <name type="scientific">Burkholderia pseudomallei (strain 668)</name>
    <dbReference type="NCBI Taxonomy" id="320373"/>
    <lineage>
        <taxon>Bacteria</taxon>
        <taxon>Pseudomonadati</taxon>
        <taxon>Pseudomonadota</taxon>
        <taxon>Betaproteobacteria</taxon>
        <taxon>Burkholderiales</taxon>
        <taxon>Burkholderiaceae</taxon>
        <taxon>Burkholderia</taxon>
        <taxon>pseudomallei group</taxon>
    </lineage>
</organism>
<comment type="function">
    <text evidence="1">Involved in urease metallocenter assembly. Binds nickel. Probably functions as a nickel donor during metallocenter assembly.</text>
</comment>
<comment type="subcellular location">
    <subcellularLocation>
        <location evidence="1">Cytoplasm</location>
    </subcellularLocation>
</comment>
<comment type="similarity">
    <text evidence="1">Belongs to the UreE family.</text>
</comment>